<organism>
    <name type="scientific">Photobacterium profundum (strain SS9)</name>
    <dbReference type="NCBI Taxonomy" id="298386"/>
    <lineage>
        <taxon>Bacteria</taxon>
        <taxon>Pseudomonadati</taxon>
        <taxon>Pseudomonadota</taxon>
        <taxon>Gammaproteobacteria</taxon>
        <taxon>Vibrionales</taxon>
        <taxon>Vibrionaceae</taxon>
        <taxon>Photobacterium</taxon>
    </lineage>
</organism>
<proteinExistence type="inferred from homology"/>
<keyword id="KW-0460">Magnesium</keyword>
<keyword id="KW-0464">Manganese</keyword>
<keyword id="KW-0474">Menaquinone biosynthesis</keyword>
<keyword id="KW-0479">Metal-binding</keyword>
<keyword id="KW-1185">Reference proteome</keyword>
<keyword id="KW-0786">Thiamine pyrophosphate</keyword>
<keyword id="KW-0808">Transferase</keyword>
<reference key="1">
    <citation type="journal article" date="2005" name="Science">
        <title>Life at depth: Photobacterium profundum genome sequence and expression analysis.</title>
        <authorList>
            <person name="Vezzi A."/>
            <person name="Campanaro S."/>
            <person name="D'Angelo M."/>
            <person name="Simonato F."/>
            <person name="Vitulo N."/>
            <person name="Lauro F.M."/>
            <person name="Cestaro A."/>
            <person name="Malacrida G."/>
            <person name="Simionati B."/>
            <person name="Cannata N."/>
            <person name="Romualdi C."/>
            <person name="Bartlett D.H."/>
            <person name="Valle G."/>
        </authorList>
    </citation>
    <scope>NUCLEOTIDE SEQUENCE [LARGE SCALE GENOMIC DNA]</scope>
    <source>
        <strain>ATCC BAA-1253 / SS9</strain>
    </source>
</reference>
<evidence type="ECO:0000255" key="1">
    <source>
        <dbReference type="HAMAP-Rule" id="MF_01659"/>
    </source>
</evidence>
<dbReference type="EC" id="2.2.1.9" evidence="1"/>
<dbReference type="EMBL" id="CR378671">
    <property type="protein sequence ID" value="CAG21003.1"/>
    <property type="molecule type" value="Genomic_DNA"/>
</dbReference>
<dbReference type="RefSeq" id="WP_011219282.1">
    <property type="nucleotide sequence ID" value="NC_006370.1"/>
</dbReference>
<dbReference type="SMR" id="Q6LNX3"/>
<dbReference type="STRING" id="298386.PBPRA2624"/>
<dbReference type="KEGG" id="ppr:PBPRA2624"/>
<dbReference type="eggNOG" id="COG1165">
    <property type="taxonomic scope" value="Bacteria"/>
</dbReference>
<dbReference type="HOGENOM" id="CLU_006051_3_0_6"/>
<dbReference type="UniPathway" id="UPA00079"/>
<dbReference type="UniPathway" id="UPA01057">
    <property type="reaction ID" value="UER00164"/>
</dbReference>
<dbReference type="Proteomes" id="UP000000593">
    <property type="component" value="Chromosome 1"/>
</dbReference>
<dbReference type="GO" id="GO:0070204">
    <property type="term" value="F:2-succinyl-5-enolpyruvyl-6-hydroxy-3-cyclohexene-1-carboxylic-acid synthase activity"/>
    <property type="evidence" value="ECO:0007669"/>
    <property type="project" value="UniProtKB-UniRule"/>
</dbReference>
<dbReference type="GO" id="GO:0000287">
    <property type="term" value="F:magnesium ion binding"/>
    <property type="evidence" value="ECO:0007669"/>
    <property type="project" value="UniProtKB-UniRule"/>
</dbReference>
<dbReference type="GO" id="GO:0030145">
    <property type="term" value="F:manganese ion binding"/>
    <property type="evidence" value="ECO:0007669"/>
    <property type="project" value="UniProtKB-UniRule"/>
</dbReference>
<dbReference type="GO" id="GO:0030976">
    <property type="term" value="F:thiamine pyrophosphate binding"/>
    <property type="evidence" value="ECO:0007669"/>
    <property type="project" value="UniProtKB-UniRule"/>
</dbReference>
<dbReference type="GO" id="GO:0009234">
    <property type="term" value="P:menaquinone biosynthetic process"/>
    <property type="evidence" value="ECO:0007669"/>
    <property type="project" value="UniProtKB-UniRule"/>
</dbReference>
<dbReference type="CDD" id="cd07037">
    <property type="entry name" value="TPP_PYR_MenD"/>
    <property type="match status" value="1"/>
</dbReference>
<dbReference type="CDD" id="cd02009">
    <property type="entry name" value="TPP_SHCHC_synthase"/>
    <property type="match status" value="1"/>
</dbReference>
<dbReference type="Gene3D" id="3.40.50.970">
    <property type="match status" value="2"/>
</dbReference>
<dbReference type="Gene3D" id="3.40.50.1220">
    <property type="entry name" value="TPP-binding domain"/>
    <property type="match status" value="1"/>
</dbReference>
<dbReference type="HAMAP" id="MF_01659">
    <property type="entry name" value="MenD"/>
    <property type="match status" value="1"/>
</dbReference>
<dbReference type="InterPro" id="IPR029035">
    <property type="entry name" value="DHS-like_NAD/FAD-binding_dom"/>
</dbReference>
<dbReference type="InterPro" id="IPR004433">
    <property type="entry name" value="MenaQ_synth_MenD"/>
</dbReference>
<dbReference type="InterPro" id="IPR032264">
    <property type="entry name" value="MenD_middle"/>
</dbReference>
<dbReference type="InterPro" id="IPR029061">
    <property type="entry name" value="THDP-binding"/>
</dbReference>
<dbReference type="InterPro" id="IPR012001">
    <property type="entry name" value="Thiamin_PyroP_enz_TPP-bd_dom"/>
</dbReference>
<dbReference type="NCBIfam" id="TIGR00173">
    <property type="entry name" value="menD"/>
    <property type="match status" value="1"/>
</dbReference>
<dbReference type="PANTHER" id="PTHR42916">
    <property type="entry name" value="2-SUCCINYL-5-ENOLPYRUVYL-6-HYDROXY-3-CYCLOHEXENE-1-CARBOXYLATE SYNTHASE"/>
    <property type="match status" value="1"/>
</dbReference>
<dbReference type="PANTHER" id="PTHR42916:SF1">
    <property type="entry name" value="PROTEIN PHYLLO, CHLOROPLASTIC"/>
    <property type="match status" value="1"/>
</dbReference>
<dbReference type="Pfam" id="PF16582">
    <property type="entry name" value="TPP_enzyme_M_2"/>
    <property type="match status" value="1"/>
</dbReference>
<dbReference type="Pfam" id="PF02776">
    <property type="entry name" value="TPP_enzyme_N"/>
    <property type="match status" value="1"/>
</dbReference>
<dbReference type="PIRSF" id="PIRSF004983">
    <property type="entry name" value="MenD"/>
    <property type="match status" value="1"/>
</dbReference>
<dbReference type="SUPFAM" id="SSF52467">
    <property type="entry name" value="DHS-like NAD/FAD-binding domain"/>
    <property type="match status" value="1"/>
</dbReference>
<dbReference type="SUPFAM" id="SSF52518">
    <property type="entry name" value="Thiamin diphosphate-binding fold (THDP-binding)"/>
    <property type="match status" value="2"/>
</dbReference>
<comment type="function">
    <text evidence="1">Catalyzes the thiamine diphosphate-dependent decarboxylation of 2-oxoglutarate and the subsequent addition of the resulting succinic semialdehyde-thiamine pyrophosphate anion to isochorismate to yield 2-succinyl-5-enolpyruvyl-6-hydroxy-3-cyclohexene-1-carboxylate (SEPHCHC).</text>
</comment>
<comment type="catalytic activity">
    <reaction evidence="1">
        <text>isochorismate + 2-oxoglutarate + H(+) = 5-enolpyruvoyl-6-hydroxy-2-succinyl-cyclohex-3-ene-1-carboxylate + CO2</text>
        <dbReference type="Rhea" id="RHEA:25593"/>
        <dbReference type="ChEBI" id="CHEBI:15378"/>
        <dbReference type="ChEBI" id="CHEBI:16526"/>
        <dbReference type="ChEBI" id="CHEBI:16810"/>
        <dbReference type="ChEBI" id="CHEBI:29780"/>
        <dbReference type="ChEBI" id="CHEBI:58818"/>
        <dbReference type="EC" id="2.2.1.9"/>
    </reaction>
</comment>
<comment type="cofactor">
    <cofactor evidence="1">
        <name>Mg(2+)</name>
        <dbReference type="ChEBI" id="CHEBI:18420"/>
    </cofactor>
    <cofactor evidence="1">
        <name>Mn(2+)</name>
        <dbReference type="ChEBI" id="CHEBI:29035"/>
    </cofactor>
</comment>
<comment type="cofactor">
    <cofactor evidence="1">
        <name>thiamine diphosphate</name>
        <dbReference type="ChEBI" id="CHEBI:58937"/>
    </cofactor>
    <text evidence="1">Binds 1 thiamine pyrophosphate per subunit.</text>
</comment>
<comment type="pathway">
    <text evidence="1">Quinol/quinone metabolism; 1,4-dihydroxy-2-naphthoate biosynthesis; 1,4-dihydroxy-2-naphthoate from chorismate: step 2/7.</text>
</comment>
<comment type="pathway">
    <text evidence="1">Quinol/quinone metabolism; menaquinone biosynthesis.</text>
</comment>
<comment type="subunit">
    <text evidence="1">Homodimer.</text>
</comment>
<comment type="similarity">
    <text evidence="1">Belongs to the TPP enzyme family. MenD subfamily.</text>
</comment>
<sequence>MTIGTITSQVNYRAALNTLWASLMLEELVRMGVKQICIAPGSRSTSLTLAAVANNKLTIHTHFDERGLGFLALGIAKASQEPVAVVVTSGTAVANLLPAVAEAGLTGEKLVLLTSDRPVELIQCGANQAIVQHDIFSQHVTAFHDIPSPTLDISPAWLLSTIDEAMQLQQRQGRAIHFNCHYPEPLYGDDVDFSEYLAPVSEWKGDELPYVSHQQALAPHIAIDKRQWQSLTQRKGVVIVGRLAPEELGQVTLLAEKLGWPLLLDPQAGGSSAWAGFDVWLQNASCQAFLQQADTVIQFGARIVSKRLLQFIATSSIEHYWLIDPRAGRLDSTHRRSSRIQAPIGEWATCALSLTENSEHAGWAMPLQVVSERYFEMLGEYSDQLTELSLAVNLGAWLPDKTELFLGNSLIIRLLDMVGKLPSTATFANRGASGIDGLIATIAGINKARQAPMVGLLGDTSLLYDLNSLALLRDVSQPVVIIVTNNDGGGIFDLLPVPALQRDELYRMPHGLEFSHAAAMFGLAYYCPESLPQAEEQCLYALTQPKTTIIEIKTPAGEAGEMIKALFGKVKNATLL</sequence>
<name>MEND_PHOPR</name>
<accession>Q6LNX3</accession>
<gene>
    <name evidence="1" type="primary">menD</name>
    <name type="ordered locus">PBPRA2624</name>
</gene>
<protein>
    <recommendedName>
        <fullName evidence="1">2-succinyl-5-enolpyruvyl-6-hydroxy-3-cyclohexene-1-carboxylate synthase</fullName>
        <shortName evidence="1">SEPHCHC synthase</shortName>
        <ecNumber evidence="1">2.2.1.9</ecNumber>
    </recommendedName>
    <alternativeName>
        <fullName evidence="1">Menaquinone biosynthesis protein MenD</fullName>
    </alternativeName>
</protein>
<feature type="chain" id="PRO_0000341795" description="2-succinyl-5-enolpyruvyl-6-hydroxy-3-cyclohexene-1-carboxylate synthase">
    <location>
        <begin position="1"/>
        <end position="576"/>
    </location>
</feature>